<organism>
    <name type="scientific">Salmonella paratyphi A (strain ATCC 9150 / SARB42)</name>
    <dbReference type="NCBI Taxonomy" id="295319"/>
    <lineage>
        <taxon>Bacteria</taxon>
        <taxon>Pseudomonadati</taxon>
        <taxon>Pseudomonadota</taxon>
        <taxon>Gammaproteobacteria</taxon>
        <taxon>Enterobacterales</taxon>
        <taxon>Enterobacteriaceae</taxon>
        <taxon>Salmonella</taxon>
    </lineage>
</organism>
<gene>
    <name evidence="1" type="primary">hscA</name>
    <name type="ordered locus">SPA0327</name>
</gene>
<dbReference type="EMBL" id="CP000026">
    <property type="protein sequence ID" value="AAV76346.1"/>
    <property type="molecule type" value="Genomic_DNA"/>
</dbReference>
<dbReference type="RefSeq" id="WP_001196660.1">
    <property type="nucleotide sequence ID" value="NC_006511.1"/>
</dbReference>
<dbReference type="SMR" id="Q5PNH1"/>
<dbReference type="KEGG" id="spt:SPA0327"/>
<dbReference type="HOGENOM" id="CLU_005965_2_1_6"/>
<dbReference type="Proteomes" id="UP000008185">
    <property type="component" value="Chromosome"/>
</dbReference>
<dbReference type="GO" id="GO:0005524">
    <property type="term" value="F:ATP binding"/>
    <property type="evidence" value="ECO:0007669"/>
    <property type="project" value="UniProtKB-KW"/>
</dbReference>
<dbReference type="GO" id="GO:0016887">
    <property type="term" value="F:ATP hydrolysis activity"/>
    <property type="evidence" value="ECO:0007669"/>
    <property type="project" value="UniProtKB-UniRule"/>
</dbReference>
<dbReference type="GO" id="GO:0140662">
    <property type="term" value="F:ATP-dependent protein folding chaperone"/>
    <property type="evidence" value="ECO:0007669"/>
    <property type="project" value="InterPro"/>
</dbReference>
<dbReference type="GO" id="GO:0051082">
    <property type="term" value="F:unfolded protein binding"/>
    <property type="evidence" value="ECO:0007669"/>
    <property type="project" value="InterPro"/>
</dbReference>
<dbReference type="GO" id="GO:0016226">
    <property type="term" value="P:iron-sulfur cluster assembly"/>
    <property type="evidence" value="ECO:0007669"/>
    <property type="project" value="InterPro"/>
</dbReference>
<dbReference type="CDD" id="cd10236">
    <property type="entry name" value="ASKHA_NBD_HSP70_HscA"/>
    <property type="match status" value="1"/>
</dbReference>
<dbReference type="FunFam" id="1.20.1270.10:FF:000006">
    <property type="entry name" value="Chaperone protein HscA"/>
    <property type="match status" value="1"/>
</dbReference>
<dbReference type="FunFam" id="3.30.420.40:FF:000046">
    <property type="entry name" value="Chaperone protein HscA"/>
    <property type="match status" value="1"/>
</dbReference>
<dbReference type="FunFam" id="3.90.640.10:FF:000013">
    <property type="entry name" value="Chaperone protein HscA"/>
    <property type="match status" value="1"/>
</dbReference>
<dbReference type="FunFam" id="2.60.34.10:FF:000005">
    <property type="entry name" value="Chaperone protein HscA homolog"/>
    <property type="match status" value="1"/>
</dbReference>
<dbReference type="Gene3D" id="1.20.1270.10">
    <property type="match status" value="1"/>
</dbReference>
<dbReference type="Gene3D" id="3.30.420.40">
    <property type="match status" value="2"/>
</dbReference>
<dbReference type="Gene3D" id="3.90.640.10">
    <property type="entry name" value="Actin, Chain A, domain 4"/>
    <property type="match status" value="1"/>
</dbReference>
<dbReference type="Gene3D" id="2.60.34.10">
    <property type="entry name" value="Substrate Binding Domain Of DNAk, Chain A, domain 1"/>
    <property type="match status" value="1"/>
</dbReference>
<dbReference type="HAMAP" id="MF_00679">
    <property type="entry name" value="HscA"/>
    <property type="match status" value="1"/>
</dbReference>
<dbReference type="InterPro" id="IPR043129">
    <property type="entry name" value="ATPase_NBD"/>
</dbReference>
<dbReference type="InterPro" id="IPR018181">
    <property type="entry name" value="Heat_shock_70_CS"/>
</dbReference>
<dbReference type="InterPro" id="IPR042039">
    <property type="entry name" value="HscA_NBD"/>
</dbReference>
<dbReference type="InterPro" id="IPR029048">
    <property type="entry name" value="HSP70_C_sf"/>
</dbReference>
<dbReference type="InterPro" id="IPR029047">
    <property type="entry name" value="HSP70_peptide-bd_sf"/>
</dbReference>
<dbReference type="InterPro" id="IPR013126">
    <property type="entry name" value="Hsp_70_fam"/>
</dbReference>
<dbReference type="InterPro" id="IPR010236">
    <property type="entry name" value="ISC_FeS_clus_asmbl_HscA"/>
</dbReference>
<dbReference type="NCBIfam" id="TIGR01991">
    <property type="entry name" value="HscA"/>
    <property type="match status" value="1"/>
</dbReference>
<dbReference type="NCBIfam" id="NF003520">
    <property type="entry name" value="PRK05183.1"/>
    <property type="match status" value="1"/>
</dbReference>
<dbReference type="PANTHER" id="PTHR19375">
    <property type="entry name" value="HEAT SHOCK PROTEIN 70KDA"/>
    <property type="match status" value="1"/>
</dbReference>
<dbReference type="Pfam" id="PF00012">
    <property type="entry name" value="HSP70"/>
    <property type="match status" value="1"/>
</dbReference>
<dbReference type="PRINTS" id="PR00301">
    <property type="entry name" value="HEATSHOCK70"/>
</dbReference>
<dbReference type="SUPFAM" id="SSF53067">
    <property type="entry name" value="Actin-like ATPase domain"/>
    <property type="match status" value="2"/>
</dbReference>
<dbReference type="SUPFAM" id="SSF100934">
    <property type="entry name" value="Heat shock protein 70kD (HSP70), C-terminal subdomain"/>
    <property type="match status" value="1"/>
</dbReference>
<dbReference type="SUPFAM" id="SSF100920">
    <property type="entry name" value="Heat shock protein 70kD (HSP70), peptide-binding domain"/>
    <property type="match status" value="1"/>
</dbReference>
<dbReference type="PROSITE" id="PS00297">
    <property type="entry name" value="HSP70_1"/>
    <property type="match status" value="1"/>
</dbReference>
<dbReference type="PROSITE" id="PS00329">
    <property type="entry name" value="HSP70_2"/>
    <property type="match status" value="1"/>
</dbReference>
<dbReference type="PROSITE" id="PS01036">
    <property type="entry name" value="HSP70_3"/>
    <property type="match status" value="1"/>
</dbReference>
<comment type="function">
    <text evidence="1">Chaperone involved in the maturation of iron-sulfur cluster-containing proteins. Has a low intrinsic ATPase activity which is markedly stimulated by HscB. Involved in the maturation of IscU.</text>
</comment>
<comment type="similarity">
    <text evidence="1">Belongs to the heat shock protein 70 family.</text>
</comment>
<protein>
    <recommendedName>
        <fullName evidence="1">Chaperone protein HscA</fullName>
    </recommendedName>
    <alternativeName>
        <fullName evidence="1">Hsc66</fullName>
    </alternativeName>
</protein>
<proteinExistence type="inferred from homology"/>
<accession>Q5PNH1</accession>
<evidence type="ECO:0000255" key="1">
    <source>
        <dbReference type="HAMAP-Rule" id="MF_00679"/>
    </source>
</evidence>
<keyword id="KW-0067">ATP-binding</keyword>
<keyword id="KW-0143">Chaperone</keyword>
<keyword id="KW-0547">Nucleotide-binding</keyword>
<name>HSCA_SALPA</name>
<feature type="chain" id="PRO_0000078646" description="Chaperone protein HscA">
    <location>
        <begin position="1"/>
        <end position="616"/>
    </location>
</feature>
<sequence length="616" mass="65681">MALLQISEPGLSAAPHQRRLAAGIDLGTTNSLVATVRSGQAETLPDHEGRHLLPSVVHYQQQGHTVGYAARDNAAQDTANTISSVKRMMGRSLADIQARYPHLPYRFKASVNGLPMIDTAAGLLNPVRVSADILKALAARASESLSGELDGVVITVPAYFDDAQRQGTKDAARLAGLHVLRLLNEPTAAAIAYGLDSGKEGVIAVYDLGGGTFDISILRLSRGVFEVLATGGDSALGGDDFDHLLADYIREQAGIADRSDNRVQRELLDAAITAKIALSDADTVRVNVAGWQGEITREQFNDLISALVKRTLLACRRALKDAGVEPQDVLEVVMVGGSTRVPLVRERVGEFFGRTPLTAIDPDKVVAIGAAIQADILVGNKPDSEMLLLDVIPLSLGLETMGGLVEKVIPRNTTIPVARAQDFTTFKDGQTAMSIHVMQGERELVQDCRSLARFALRGIPPLPAGGAHIRVTFQVDADGLLSVTAMEKSTGVEASIQVKPSYGLTDSEIASMIKDSMSFAEQDVKARMLAEQKVEAARVLESLTGALTADAALLSAAERQCIDDAAAHLSAVAQGDDVDAIEQAIKNVDKQTQEFAARRMDQSVRRALKGHSVDEV</sequence>
<reference key="1">
    <citation type="journal article" date="2004" name="Nat. Genet.">
        <title>Comparison of genome degradation in Paratyphi A and Typhi, human-restricted serovars of Salmonella enterica that cause typhoid.</title>
        <authorList>
            <person name="McClelland M."/>
            <person name="Sanderson K.E."/>
            <person name="Clifton S.W."/>
            <person name="Latreille P."/>
            <person name="Porwollik S."/>
            <person name="Sabo A."/>
            <person name="Meyer R."/>
            <person name="Bieri T."/>
            <person name="Ozersky P."/>
            <person name="McLellan M."/>
            <person name="Harkins C.R."/>
            <person name="Wang C."/>
            <person name="Nguyen C."/>
            <person name="Berghoff A."/>
            <person name="Elliott G."/>
            <person name="Kohlberg S."/>
            <person name="Strong C."/>
            <person name="Du F."/>
            <person name="Carter J."/>
            <person name="Kremizki C."/>
            <person name="Layman D."/>
            <person name="Leonard S."/>
            <person name="Sun H."/>
            <person name="Fulton L."/>
            <person name="Nash W."/>
            <person name="Miner T."/>
            <person name="Minx P."/>
            <person name="Delehaunty K."/>
            <person name="Fronick C."/>
            <person name="Magrini V."/>
            <person name="Nhan M."/>
            <person name="Warren W."/>
            <person name="Florea L."/>
            <person name="Spieth J."/>
            <person name="Wilson R.K."/>
        </authorList>
    </citation>
    <scope>NUCLEOTIDE SEQUENCE [LARGE SCALE GENOMIC DNA]</scope>
    <source>
        <strain>ATCC 9150 / SARB42</strain>
    </source>
</reference>